<organism>
    <name type="scientific">Oryza sativa subsp. japonica</name>
    <name type="common">Rice</name>
    <dbReference type="NCBI Taxonomy" id="39947"/>
    <lineage>
        <taxon>Eukaryota</taxon>
        <taxon>Viridiplantae</taxon>
        <taxon>Streptophyta</taxon>
        <taxon>Embryophyta</taxon>
        <taxon>Tracheophyta</taxon>
        <taxon>Spermatophyta</taxon>
        <taxon>Magnoliopsida</taxon>
        <taxon>Liliopsida</taxon>
        <taxon>Poales</taxon>
        <taxon>Poaceae</taxon>
        <taxon>BOP clade</taxon>
        <taxon>Oryzoideae</taxon>
        <taxon>Oryzeae</taxon>
        <taxon>Oryzinae</taxon>
        <taxon>Oryza</taxon>
        <taxon>Oryza sativa</taxon>
    </lineage>
</organism>
<sequence length="292" mass="31747">MALLSPPSPPPPLPPLRRRPASPTLLAVATRPSSLLSLPHCHCGLPLPSTANARAYSRSSRRRRRVAASLGQDEPGVSDTAVAPEGEGDSEPPASSDGAAGDIAASAEQPEASPEDLEDIRQVKRVLELLQKNRDMTFGEVKLTIMIEDPRDIERKRLLGIEDPDEITRDDLADALVEVNEGRIPENRVALQLLAKEMTEWPDLEMEAPKKKSKPGKSVYAKATDTGIDPETAAKRLNIDWDSAADLDDEEEEDDETEVPSAVGYSALYLLTAFPVIIGISVVLILFYNSLQ</sequence>
<protein>
    <recommendedName>
        <fullName evidence="4">Protein CHLOROPLAST ENHANCING STRESS TOLERANCE, chloroplastic</fullName>
        <shortName evidence="4">OsCEST</shortName>
    </recommendedName>
</protein>
<keyword id="KW-0025">Alternative splicing</keyword>
<keyword id="KW-0150">Chloroplast</keyword>
<keyword id="KW-0472">Membrane</keyword>
<keyword id="KW-0934">Plastid</keyword>
<keyword id="KW-1185">Reference proteome</keyword>
<keyword id="KW-0346">Stress response</keyword>
<keyword id="KW-0793">Thylakoid</keyword>
<keyword id="KW-0809">Transit peptide</keyword>
<keyword id="KW-0812">Transmembrane</keyword>
<keyword id="KW-1133">Transmembrane helix</keyword>
<dbReference type="EMBL" id="AP003293">
    <property type="protein sequence ID" value="BAD68270.1"/>
    <property type="molecule type" value="Genomic_DNA"/>
</dbReference>
<dbReference type="EMBL" id="AP008207">
    <property type="protein sequence ID" value="BAF06438.1"/>
    <property type="molecule type" value="Genomic_DNA"/>
</dbReference>
<dbReference type="EMBL" id="AP014957">
    <property type="protein sequence ID" value="BAS74774.1"/>
    <property type="molecule type" value="Genomic_DNA"/>
</dbReference>
<dbReference type="EMBL" id="CM000138">
    <property type="protein sequence ID" value="EEE55526.1"/>
    <property type="molecule type" value="Genomic_DNA"/>
</dbReference>
<dbReference type="EMBL" id="AK068219">
    <property type="protein sequence ID" value="BAG90808.1"/>
    <property type="molecule type" value="mRNA"/>
</dbReference>
<dbReference type="RefSeq" id="XP_015623956.1">
    <property type="nucleotide sequence ID" value="XM_015768470.1"/>
</dbReference>
<dbReference type="SMR" id="Q5VQK9"/>
<dbReference type="FunCoup" id="Q5VQK9">
    <property type="interactions" value="1918"/>
</dbReference>
<dbReference type="STRING" id="39947.Q5VQK9"/>
<dbReference type="PaxDb" id="39947-Q5VQK9"/>
<dbReference type="EnsemblPlants" id="Os01t0798500-02">
    <molecule id="Q5VQK9-1"/>
    <property type="protein sequence ID" value="Os01t0798500-02"/>
    <property type="gene ID" value="Os01g0798500"/>
</dbReference>
<dbReference type="Gramene" id="Os01t0798500-02">
    <molecule id="Q5VQK9-1"/>
    <property type="protein sequence ID" value="Os01t0798500-02"/>
    <property type="gene ID" value="Os01g0798500"/>
</dbReference>
<dbReference type="KEGG" id="dosa:Os01g0798500"/>
<dbReference type="eggNOG" id="ENOG502QRUJ">
    <property type="taxonomic scope" value="Eukaryota"/>
</dbReference>
<dbReference type="HOGENOM" id="CLU_083736_0_0_1"/>
<dbReference type="InParanoid" id="Q5VQK9"/>
<dbReference type="OMA" id="KRLNVDW"/>
<dbReference type="OrthoDB" id="2018626at2759"/>
<dbReference type="Proteomes" id="UP000000763">
    <property type="component" value="Chromosome 1"/>
</dbReference>
<dbReference type="Proteomes" id="UP000007752">
    <property type="component" value="Chromosome 1"/>
</dbReference>
<dbReference type="Proteomes" id="UP000059680">
    <property type="component" value="Chromosome 1"/>
</dbReference>
<dbReference type="ExpressionAtlas" id="Q5VQK9">
    <property type="expression patterns" value="baseline and differential"/>
</dbReference>
<dbReference type="GO" id="GO:0009535">
    <property type="term" value="C:chloroplast thylakoid membrane"/>
    <property type="evidence" value="ECO:0000314"/>
    <property type="project" value="UniProtKB"/>
</dbReference>
<dbReference type="GO" id="GO:0009658">
    <property type="term" value="P:chloroplast organization"/>
    <property type="evidence" value="ECO:0000315"/>
    <property type="project" value="UniProtKB"/>
</dbReference>
<dbReference type="GO" id="GO:0010286">
    <property type="term" value="P:heat acclimation"/>
    <property type="evidence" value="ECO:0000315"/>
    <property type="project" value="UniProtKB"/>
</dbReference>
<dbReference type="GO" id="GO:0042538">
    <property type="term" value="P:hyperosmotic salinity response"/>
    <property type="evidence" value="ECO:0000315"/>
    <property type="project" value="UniProtKB"/>
</dbReference>
<dbReference type="GO" id="GO:0048564">
    <property type="term" value="P:photosystem I assembly"/>
    <property type="evidence" value="ECO:0007669"/>
    <property type="project" value="InterPro"/>
</dbReference>
<dbReference type="GO" id="GO:0080183">
    <property type="term" value="P:response to photooxidative stress"/>
    <property type="evidence" value="ECO:0000315"/>
    <property type="project" value="UniProtKB"/>
</dbReference>
<dbReference type="GO" id="GO:0009414">
    <property type="term" value="P:response to water deprivation"/>
    <property type="evidence" value="ECO:0000315"/>
    <property type="project" value="UniProtKB"/>
</dbReference>
<dbReference type="InterPro" id="IPR040340">
    <property type="entry name" value="CEST/Y3IP1"/>
</dbReference>
<dbReference type="PANTHER" id="PTHR33672">
    <property type="entry name" value="YCF3-INTERACTING PROTEIN 1, CHLOROPLASTIC"/>
    <property type="match status" value="1"/>
</dbReference>
<dbReference type="PANTHER" id="PTHR33672:SF3">
    <property type="entry name" value="YCF3-INTERACTING PROTEIN 1, CHLOROPLASTIC"/>
    <property type="match status" value="1"/>
</dbReference>
<gene>
    <name type="primary">CEST</name>
    <name evidence="8" type="ordered locus">Os01g0798500</name>
    <name evidence="5" type="ordered locus">LOC_Os01g58470</name>
    <name evidence="9" type="ORF">OsJ_03754</name>
    <name evidence="7" type="ORF">P0691E06.11-1</name>
</gene>
<comment type="function">
    <text evidence="3">Involved in light-induced chloroplast development and growth. Involved in the plant response to abiotic and photooxidative stresses. May be involved in the suppression of photooxidative damage.</text>
</comment>
<comment type="subcellular location">
    <subcellularLocation>
        <location evidence="6">Plastid</location>
        <location evidence="6">Chloroplast thylakoid membrane</location>
        <topology evidence="1">Single-pass membrane protein</topology>
    </subcellularLocation>
</comment>
<comment type="alternative products">
    <event type="alternative splicing"/>
    <isoform>
        <id>Q5VQK9-1</id>
        <name>1</name>
        <sequence type="displayed"/>
    </isoform>
    <text evidence="5">A number of isoforms are produced. According to EST sequences.</text>
</comment>
<comment type="similarity">
    <text evidence="5">Belongs to the Y3IP1/CEST family.</text>
</comment>
<accession>Q5VQK9</accession>
<accession>A0A0P0V982</accession>
<evidence type="ECO:0000255" key="1"/>
<evidence type="ECO:0000256" key="2">
    <source>
        <dbReference type="SAM" id="MobiDB-lite"/>
    </source>
</evidence>
<evidence type="ECO:0000269" key="3">
    <source>
    </source>
</evidence>
<evidence type="ECO:0000303" key="4">
    <source>
    </source>
</evidence>
<evidence type="ECO:0000305" key="5"/>
<evidence type="ECO:0000305" key="6">
    <source>
    </source>
</evidence>
<evidence type="ECO:0000312" key="7">
    <source>
        <dbReference type="EMBL" id="BAD68270.1"/>
    </source>
</evidence>
<evidence type="ECO:0000312" key="8">
    <source>
        <dbReference type="EMBL" id="BAF06438.1"/>
    </source>
</evidence>
<evidence type="ECO:0000312" key="9">
    <source>
        <dbReference type="EMBL" id="EEE55526.1"/>
    </source>
</evidence>
<feature type="transit peptide" description="Chloroplast" evidence="1">
    <location>
        <begin position="1"/>
        <end position="67"/>
    </location>
</feature>
<feature type="chain" id="PRO_0000433223" description="Protein CHLOROPLAST ENHANCING STRESS TOLERANCE, chloroplastic" evidence="1">
    <location>
        <begin position="68"/>
        <end position="292"/>
    </location>
</feature>
<feature type="transmembrane region" description="Helical" evidence="1">
    <location>
        <begin position="267"/>
        <end position="287"/>
    </location>
</feature>
<feature type="region of interest" description="Disordered" evidence="2">
    <location>
        <begin position="1"/>
        <end position="119"/>
    </location>
</feature>
<feature type="region of interest" description="Disordered" evidence="2">
    <location>
        <begin position="206"/>
        <end position="225"/>
    </location>
</feature>
<feature type="compositionally biased region" description="Pro residues" evidence="2">
    <location>
        <begin position="1"/>
        <end position="15"/>
    </location>
</feature>
<feature type="compositionally biased region" description="Low complexity" evidence="2">
    <location>
        <begin position="49"/>
        <end position="58"/>
    </location>
</feature>
<feature type="compositionally biased region" description="Low complexity" evidence="2">
    <location>
        <begin position="94"/>
        <end position="112"/>
    </location>
</feature>
<reference key="1">
    <citation type="journal article" date="2002" name="Nature">
        <title>The genome sequence and structure of rice chromosome 1.</title>
        <authorList>
            <person name="Sasaki T."/>
            <person name="Matsumoto T."/>
            <person name="Yamamoto K."/>
            <person name="Sakata K."/>
            <person name="Baba T."/>
            <person name="Katayose Y."/>
            <person name="Wu J."/>
            <person name="Niimura Y."/>
            <person name="Cheng Z."/>
            <person name="Nagamura Y."/>
            <person name="Antonio B.A."/>
            <person name="Kanamori H."/>
            <person name="Hosokawa S."/>
            <person name="Masukawa M."/>
            <person name="Arikawa K."/>
            <person name="Chiden Y."/>
            <person name="Hayashi M."/>
            <person name="Okamoto M."/>
            <person name="Ando T."/>
            <person name="Aoki H."/>
            <person name="Arita K."/>
            <person name="Hamada M."/>
            <person name="Harada C."/>
            <person name="Hijishita S."/>
            <person name="Honda M."/>
            <person name="Ichikawa Y."/>
            <person name="Idonuma A."/>
            <person name="Iijima M."/>
            <person name="Ikeda M."/>
            <person name="Ikeno M."/>
            <person name="Ito S."/>
            <person name="Ito T."/>
            <person name="Ito Y."/>
            <person name="Ito Y."/>
            <person name="Iwabuchi A."/>
            <person name="Kamiya K."/>
            <person name="Karasawa W."/>
            <person name="Katagiri S."/>
            <person name="Kikuta A."/>
            <person name="Kobayashi N."/>
            <person name="Kono I."/>
            <person name="Machita K."/>
            <person name="Maehara T."/>
            <person name="Mizuno H."/>
            <person name="Mizubayashi T."/>
            <person name="Mukai Y."/>
            <person name="Nagasaki H."/>
            <person name="Nakashima M."/>
            <person name="Nakama Y."/>
            <person name="Nakamichi Y."/>
            <person name="Nakamura M."/>
            <person name="Namiki N."/>
            <person name="Negishi M."/>
            <person name="Ohta I."/>
            <person name="Ono N."/>
            <person name="Saji S."/>
            <person name="Sakai K."/>
            <person name="Shibata M."/>
            <person name="Shimokawa T."/>
            <person name="Shomura A."/>
            <person name="Song J."/>
            <person name="Takazaki Y."/>
            <person name="Terasawa K."/>
            <person name="Tsuji K."/>
            <person name="Waki K."/>
            <person name="Yamagata H."/>
            <person name="Yamane H."/>
            <person name="Yoshiki S."/>
            <person name="Yoshihara R."/>
            <person name="Yukawa K."/>
            <person name="Zhong H."/>
            <person name="Iwama H."/>
            <person name="Endo T."/>
            <person name="Ito H."/>
            <person name="Hahn J.H."/>
            <person name="Kim H.-I."/>
            <person name="Eun M.-Y."/>
            <person name="Yano M."/>
            <person name="Jiang J."/>
            <person name="Gojobori T."/>
        </authorList>
    </citation>
    <scope>NUCLEOTIDE SEQUENCE [LARGE SCALE GENOMIC DNA]</scope>
    <source>
        <strain>cv. Nipponbare</strain>
    </source>
</reference>
<reference key="2">
    <citation type="journal article" date="2005" name="Nature">
        <title>The map-based sequence of the rice genome.</title>
        <authorList>
            <consortium name="International rice genome sequencing project (IRGSP)"/>
        </authorList>
    </citation>
    <scope>NUCLEOTIDE SEQUENCE [LARGE SCALE GENOMIC DNA]</scope>
    <source>
        <strain>cv. Nipponbare</strain>
    </source>
</reference>
<reference key="3">
    <citation type="journal article" date="2008" name="Nucleic Acids Res.">
        <title>The rice annotation project database (RAP-DB): 2008 update.</title>
        <authorList>
            <consortium name="The rice annotation project (RAP)"/>
        </authorList>
    </citation>
    <scope>GENOME REANNOTATION</scope>
    <source>
        <strain>cv. Nipponbare</strain>
    </source>
</reference>
<reference key="4">
    <citation type="journal article" date="2013" name="Rice">
        <title>Improvement of the Oryza sativa Nipponbare reference genome using next generation sequence and optical map data.</title>
        <authorList>
            <person name="Kawahara Y."/>
            <person name="de la Bastide M."/>
            <person name="Hamilton J.P."/>
            <person name="Kanamori H."/>
            <person name="McCombie W.R."/>
            <person name="Ouyang S."/>
            <person name="Schwartz D.C."/>
            <person name="Tanaka T."/>
            <person name="Wu J."/>
            <person name="Zhou S."/>
            <person name="Childs K.L."/>
            <person name="Davidson R.M."/>
            <person name="Lin H."/>
            <person name="Quesada-Ocampo L."/>
            <person name="Vaillancourt B."/>
            <person name="Sakai H."/>
            <person name="Lee S.S."/>
            <person name="Kim J."/>
            <person name="Numa H."/>
            <person name="Itoh T."/>
            <person name="Buell C.R."/>
            <person name="Matsumoto T."/>
        </authorList>
    </citation>
    <scope>GENOME REANNOTATION</scope>
    <source>
        <strain>cv. Nipponbare</strain>
    </source>
</reference>
<reference key="5">
    <citation type="journal article" date="2005" name="PLoS Biol.">
        <title>The genomes of Oryza sativa: a history of duplications.</title>
        <authorList>
            <person name="Yu J."/>
            <person name="Wang J."/>
            <person name="Lin W."/>
            <person name="Li S."/>
            <person name="Li H."/>
            <person name="Zhou J."/>
            <person name="Ni P."/>
            <person name="Dong W."/>
            <person name="Hu S."/>
            <person name="Zeng C."/>
            <person name="Zhang J."/>
            <person name="Zhang Y."/>
            <person name="Li R."/>
            <person name="Xu Z."/>
            <person name="Li S."/>
            <person name="Li X."/>
            <person name="Zheng H."/>
            <person name="Cong L."/>
            <person name="Lin L."/>
            <person name="Yin J."/>
            <person name="Geng J."/>
            <person name="Li G."/>
            <person name="Shi J."/>
            <person name="Liu J."/>
            <person name="Lv H."/>
            <person name="Li J."/>
            <person name="Wang J."/>
            <person name="Deng Y."/>
            <person name="Ran L."/>
            <person name="Shi X."/>
            <person name="Wang X."/>
            <person name="Wu Q."/>
            <person name="Li C."/>
            <person name="Ren X."/>
            <person name="Wang J."/>
            <person name="Wang X."/>
            <person name="Li D."/>
            <person name="Liu D."/>
            <person name="Zhang X."/>
            <person name="Ji Z."/>
            <person name="Zhao W."/>
            <person name="Sun Y."/>
            <person name="Zhang Z."/>
            <person name="Bao J."/>
            <person name="Han Y."/>
            <person name="Dong L."/>
            <person name="Ji J."/>
            <person name="Chen P."/>
            <person name="Wu S."/>
            <person name="Liu J."/>
            <person name="Xiao Y."/>
            <person name="Bu D."/>
            <person name="Tan J."/>
            <person name="Yang L."/>
            <person name="Ye C."/>
            <person name="Zhang J."/>
            <person name="Xu J."/>
            <person name="Zhou Y."/>
            <person name="Yu Y."/>
            <person name="Zhang B."/>
            <person name="Zhuang S."/>
            <person name="Wei H."/>
            <person name="Liu B."/>
            <person name="Lei M."/>
            <person name="Yu H."/>
            <person name="Li Y."/>
            <person name="Xu H."/>
            <person name="Wei S."/>
            <person name="He X."/>
            <person name="Fang L."/>
            <person name="Zhang Z."/>
            <person name="Zhang Y."/>
            <person name="Huang X."/>
            <person name="Su Z."/>
            <person name="Tong W."/>
            <person name="Li J."/>
            <person name="Tong Z."/>
            <person name="Li S."/>
            <person name="Ye J."/>
            <person name="Wang L."/>
            <person name="Fang L."/>
            <person name="Lei T."/>
            <person name="Chen C.-S."/>
            <person name="Chen H.-C."/>
            <person name="Xu Z."/>
            <person name="Li H."/>
            <person name="Huang H."/>
            <person name="Zhang F."/>
            <person name="Xu H."/>
            <person name="Li N."/>
            <person name="Zhao C."/>
            <person name="Li S."/>
            <person name="Dong L."/>
            <person name="Huang Y."/>
            <person name="Li L."/>
            <person name="Xi Y."/>
            <person name="Qi Q."/>
            <person name="Li W."/>
            <person name="Zhang B."/>
            <person name="Hu W."/>
            <person name="Zhang Y."/>
            <person name="Tian X."/>
            <person name="Jiao Y."/>
            <person name="Liang X."/>
            <person name="Jin J."/>
            <person name="Gao L."/>
            <person name="Zheng W."/>
            <person name="Hao B."/>
            <person name="Liu S.-M."/>
            <person name="Wang W."/>
            <person name="Yuan L."/>
            <person name="Cao M."/>
            <person name="McDermott J."/>
            <person name="Samudrala R."/>
            <person name="Wang J."/>
            <person name="Wong G.K.-S."/>
            <person name="Yang H."/>
        </authorList>
    </citation>
    <scope>NUCLEOTIDE SEQUENCE [LARGE SCALE GENOMIC DNA]</scope>
    <source>
        <strain>cv. Nipponbare</strain>
    </source>
</reference>
<reference key="6">
    <citation type="journal article" date="2003" name="Science">
        <title>Collection, mapping, and annotation of over 28,000 cDNA clones from japonica rice.</title>
        <authorList>
            <consortium name="The rice full-length cDNA consortium"/>
        </authorList>
    </citation>
    <scope>NUCLEOTIDE SEQUENCE [LARGE SCALE MRNA]</scope>
    <source>
        <strain>cv. Nipponbare</strain>
    </source>
</reference>
<reference key="7">
    <citation type="journal article" date="2011" name="J. Exp. Bot.">
        <title>A novel chloroplast protein, CEST induces tolerance to multiple environmental stresses and reduces photooxidative damage in transgenic Arabidopsis.</title>
        <authorList>
            <person name="Yokotani N."/>
            <person name="Higuchi M."/>
            <person name="Kondou Y."/>
            <person name="Ichikawa T."/>
            <person name="Iwabuchi M."/>
            <person name="Hirochika H."/>
            <person name="Matsui M."/>
            <person name="Oda K."/>
        </authorList>
    </citation>
    <scope>FUNCTION</scope>
    <scope>SUBCELLULAR LOCATION</scope>
    <scope>TISSUE SPECIFICITY</scope>
</reference>
<proteinExistence type="evidence at transcript level"/>
<name>CEST_ORYSJ</name>